<name>LP9C_GLOTR</name>
<comment type="function">
    <text evidence="2 5">Lytic polysaccharide monooxygenase (LPMO) that depolymerizes crystalline and amorphous polysaccharides via the oxidation of scissile alpha- or beta-(1-4)-glycosidic bonds, yielding C1 or C4 oxidation products (PubMed:27590806). Catalysis by LPMOs requires the reduction of the active-site copper from Cu(II) to Cu(I) by a reducing agent and H(2)O(2) or O(2) as a cosubstrate (By similarity).</text>
</comment>
<comment type="catalytic activity">
    <reaction evidence="8">
        <text>[(1-&gt;4)-beta-D-glucosyl]n+m + reduced acceptor + O2 = 4-dehydro-beta-D-glucosyl-[(1-&gt;4)-beta-D-glucosyl]n-1 + [(1-&gt;4)-beta-D-glucosyl]m + acceptor + H2O.</text>
        <dbReference type="EC" id="1.14.99.56"/>
    </reaction>
</comment>
<comment type="cofactor">
    <cofactor evidence="2">
        <name>Cu(2+)</name>
        <dbReference type="ChEBI" id="CHEBI:29036"/>
    </cofactor>
    <text evidence="2">Binds 1 copper ion per subunit.</text>
</comment>
<comment type="subcellular location">
    <subcellularLocation>
        <location evidence="8">Secreted</location>
    </subcellularLocation>
</comment>
<comment type="biotechnology">
    <text evidence="2">Lignocellulose is the most abundant polymeric composite on Earth and is a recalcitrant but promising renewable substrate for industrial biotechnology applications. Together with cellobiose dehydrogenases (CDHs) an enzymatic system capable of oxidative cellulose cleavage is formed, which increases the efficiency of cellulases and put LPMOs at focus of biofuel research.</text>
</comment>
<comment type="similarity">
    <text evidence="7">Belongs to the polysaccharide monooxygenase AA9 family.</text>
</comment>
<sequence length="239" mass="25764">HTIFQRVYVDGVGEGHLSGIRIPESNWPIMDLSSNAIICNGGVNPYHEPVSLAIIQVPAGSTITAEWHPTIDDVNTTESIRPDHKGPVIAYLAKVPDALQTDVAGLSWFKFYEDGLSDDGTWATDRLIANAGKVNFTIPSCIQPGAYLLRHEIIAVHKAETYPGAQFYLRTLLTIFVFEVETAATPQMECAQLNITGPGSVVPSPTATFPGAYGSTDPGITVDIERLINYTVPGMPAEG</sequence>
<gene>
    <name evidence="6" type="primary">LPMO9C</name>
</gene>
<organism>
    <name type="scientific">Gloeophyllum trabeum</name>
    <name type="common">Brown rot fungus</name>
    <name type="synonym">Agaricus trabeus</name>
    <dbReference type="NCBI Taxonomy" id="104355"/>
    <lineage>
        <taxon>Eukaryota</taxon>
        <taxon>Fungi</taxon>
        <taxon>Dikarya</taxon>
        <taxon>Basidiomycota</taxon>
        <taxon>Agaricomycotina</taxon>
        <taxon>Agaricomycetes</taxon>
        <taxon>Gloeophyllales</taxon>
        <taxon>Gloeophyllaceae</taxon>
        <taxon>Gloeophyllum</taxon>
    </lineage>
</organism>
<dbReference type="EC" id="1.14.99.56" evidence="8"/>
<dbReference type="EMBL" id="LC157849">
    <property type="protein sequence ID" value="BAV57613.1"/>
    <property type="molecule type" value="mRNA"/>
</dbReference>
<dbReference type="SMR" id="A0A1C9ZMC3"/>
<dbReference type="BRENDA" id="1.14.99.B10">
    <property type="organism ID" value="2452"/>
</dbReference>
<dbReference type="GO" id="GO:0005576">
    <property type="term" value="C:extracellular region"/>
    <property type="evidence" value="ECO:0007669"/>
    <property type="project" value="UniProtKB-SubCell"/>
</dbReference>
<dbReference type="GO" id="GO:0046872">
    <property type="term" value="F:metal ion binding"/>
    <property type="evidence" value="ECO:0007669"/>
    <property type="project" value="UniProtKB-KW"/>
</dbReference>
<dbReference type="GO" id="GO:0004497">
    <property type="term" value="F:monooxygenase activity"/>
    <property type="evidence" value="ECO:0007669"/>
    <property type="project" value="UniProtKB-KW"/>
</dbReference>
<dbReference type="GO" id="GO:0030245">
    <property type="term" value="P:cellulose catabolic process"/>
    <property type="evidence" value="ECO:0007669"/>
    <property type="project" value="UniProtKB-KW"/>
</dbReference>
<dbReference type="CDD" id="cd21175">
    <property type="entry name" value="LPMO_AA9"/>
    <property type="match status" value="1"/>
</dbReference>
<dbReference type="Gene3D" id="2.70.50.70">
    <property type="match status" value="1"/>
</dbReference>
<dbReference type="InterPro" id="IPR049892">
    <property type="entry name" value="AA9"/>
</dbReference>
<dbReference type="InterPro" id="IPR005103">
    <property type="entry name" value="AA9_LPMO"/>
</dbReference>
<dbReference type="PANTHER" id="PTHR33353:SF17">
    <property type="entry name" value="ENDO-BETA-1,4-GLUCANASE D"/>
    <property type="match status" value="1"/>
</dbReference>
<dbReference type="PANTHER" id="PTHR33353">
    <property type="entry name" value="PUTATIVE (AFU_ORTHOLOGUE AFUA_1G12560)-RELATED"/>
    <property type="match status" value="1"/>
</dbReference>
<dbReference type="Pfam" id="PF03443">
    <property type="entry name" value="AA9"/>
    <property type="match status" value="1"/>
</dbReference>
<feature type="chain" id="PRO_0000459986" description="AA9 family lytic polysaccharide monooxygenase C">
    <location>
        <begin position="1" status="less than"/>
        <end position="239"/>
    </location>
</feature>
<feature type="binding site" evidence="3">
    <location>
        <position position="1"/>
    </location>
    <ligand>
        <name>Cu(2+)</name>
        <dbReference type="ChEBI" id="CHEBI:29036"/>
        <note>catalytic</note>
    </ligand>
</feature>
<feature type="binding site" evidence="3">
    <location>
        <position position="84"/>
    </location>
    <ligand>
        <name>Cu(2+)</name>
        <dbReference type="ChEBI" id="CHEBI:29036"/>
        <note>catalytic</note>
    </ligand>
</feature>
<feature type="binding site" evidence="2">
    <location>
        <position position="157"/>
    </location>
    <ligand>
        <name>O2</name>
        <dbReference type="ChEBI" id="CHEBI:15379"/>
    </ligand>
</feature>
<feature type="binding site" evidence="2">
    <location>
        <position position="166"/>
    </location>
    <ligand>
        <name>O2</name>
        <dbReference type="ChEBI" id="CHEBI:15379"/>
    </ligand>
</feature>
<feature type="binding site" evidence="3">
    <location>
        <position position="168"/>
    </location>
    <ligand>
        <name>Cu(2+)</name>
        <dbReference type="ChEBI" id="CHEBI:29036"/>
        <note>catalytic</note>
    </ligand>
</feature>
<feature type="glycosylation site" description="N-linked (GlcNAc...) asparagine" evidence="4">
    <location>
        <position position="75"/>
    </location>
</feature>
<feature type="glycosylation site" description="N-linked (GlcNAc...) asparagine" evidence="4">
    <location>
        <position position="135"/>
    </location>
</feature>
<feature type="glycosylation site" description="N-linked (GlcNAc...) asparagine" evidence="4">
    <location>
        <position position="194"/>
    </location>
</feature>
<feature type="glycosylation site" description="N-linked (GlcNAc...) asparagine" evidence="4">
    <location>
        <position position="229"/>
    </location>
</feature>
<feature type="disulfide bond" evidence="1">
    <location>
        <begin position="39"/>
        <end position="190"/>
    </location>
</feature>
<feature type="non-terminal residue" evidence="7">
    <location>
        <position position="1"/>
    </location>
</feature>
<keyword id="KW-0119">Carbohydrate metabolism</keyword>
<keyword id="KW-0136">Cellulose degradation</keyword>
<keyword id="KW-0186">Copper</keyword>
<keyword id="KW-1015">Disulfide bond</keyword>
<keyword id="KW-0325">Glycoprotein</keyword>
<keyword id="KW-0479">Metal-binding</keyword>
<keyword id="KW-0503">Monooxygenase</keyword>
<keyword id="KW-0560">Oxidoreductase</keyword>
<keyword id="KW-0624">Polysaccharide degradation</keyword>
<keyword id="KW-0964">Secreted</keyword>
<evidence type="ECO:0000250" key="1">
    <source>
        <dbReference type="UniProtKB" id="A0A5J6BJN2"/>
    </source>
</evidence>
<evidence type="ECO:0000250" key="2">
    <source>
        <dbReference type="UniProtKB" id="Q1K8B6"/>
    </source>
</evidence>
<evidence type="ECO:0000250" key="3">
    <source>
        <dbReference type="UniProtKB" id="Q7Z9M7"/>
    </source>
</evidence>
<evidence type="ECO:0000255" key="4">
    <source>
        <dbReference type="PROSITE-ProRule" id="PRU00498"/>
    </source>
</evidence>
<evidence type="ECO:0000269" key="5">
    <source>
    </source>
</evidence>
<evidence type="ECO:0000303" key="6">
    <source>
    </source>
</evidence>
<evidence type="ECO:0000305" key="7"/>
<evidence type="ECO:0000305" key="8">
    <source>
    </source>
</evidence>
<accession>A0A1C9ZMC3</accession>
<reference key="1">
    <citation type="journal article" date="2016" name="Appl. Environ. Microbiol.">
        <title>A Lytic Polysaccharide Monooxygenase with Broad Xyloglucan Specificity from the Brown-Rot Fungus Gloeophyllum trabeum and Its Action on Cellulose-Xyloglucan Complexes.</title>
        <authorList>
            <person name="Kojima Y."/>
            <person name="Varnai A."/>
            <person name="Ishida T."/>
            <person name="Sunagawa N."/>
            <person name="Petrovic D.M."/>
            <person name="Igarashi K."/>
            <person name="Jellison J."/>
            <person name="Goodell B."/>
            <person name="Alfredsen G."/>
            <person name="Westereng B."/>
            <person name="Eijsink V.G.H."/>
            <person name="Yoshida M."/>
        </authorList>
    </citation>
    <scope>NUCLEOTIDE SEQUENCE [MRNA]</scope>
    <scope>FUNCTION</scope>
    <source>
        <strain>NBRC 6430</strain>
    </source>
</reference>
<protein>
    <recommendedName>
        <fullName evidence="6">AA9 family lytic polysaccharide monooxygenase C</fullName>
        <shortName evidence="6">LPMO9C</shortName>
        <ecNumber evidence="8">1.14.99.56</ecNumber>
    </recommendedName>
    <alternativeName>
        <fullName evidence="7">Cellulase LPMO9C</fullName>
    </alternativeName>
    <alternativeName>
        <fullName evidence="7">Endo-beta-1,4-glucanase LPMO9C</fullName>
        <shortName evidence="7">Endoglucanase LPMO9C</shortName>
    </alternativeName>
    <alternativeName>
        <fullName evidence="7">Glycosyl hydrolase 61 family protein LPMO9C</fullName>
    </alternativeName>
</protein>
<proteinExistence type="evidence at transcript level"/>